<keyword id="KW-0067">ATP-binding</keyword>
<keyword id="KW-0997">Cell inner membrane</keyword>
<keyword id="KW-1003">Cell membrane</keyword>
<keyword id="KW-0406">Ion transport</keyword>
<keyword id="KW-0472">Membrane</keyword>
<keyword id="KW-0547">Nucleotide-binding</keyword>
<keyword id="KW-1278">Translocase</keyword>
<keyword id="KW-0813">Transport</keyword>
<keyword id="KW-0862">Zinc</keyword>
<keyword id="KW-0864">Zinc transport</keyword>
<organism>
    <name type="scientific">Pseudomonas aeruginosa (strain UCBPP-PA14)</name>
    <dbReference type="NCBI Taxonomy" id="208963"/>
    <lineage>
        <taxon>Bacteria</taxon>
        <taxon>Pseudomonadati</taxon>
        <taxon>Pseudomonadota</taxon>
        <taxon>Gammaproteobacteria</taxon>
        <taxon>Pseudomonadales</taxon>
        <taxon>Pseudomonadaceae</taxon>
        <taxon>Pseudomonas</taxon>
    </lineage>
</organism>
<sequence length="269" mass="29156">MDNALVRLTQVGVSFNGQAVLSDVDLAIEPGQIVTLIGPNGAGKTTLVRSVLGLLKPHVGEVWRRPRLTIGYMPQKLHVDATLPLSVLRFLRLVPGVKREQALAALREVGAAHVLERPLQSISGGELQRVLLARALLRKPELLVLDEPVQGVDVAGQAELYRLIGKLRDRYGCGVLMVSHDLHLVMSATDQVVCLNRHVCCSGHPEQVSGDPAFVELFGQDARSLAIYHHHHDHAHDLHGEVVKAGPGALPPGTRFTPVHKHGPDCNHG</sequence>
<accession>Q02DK9</accession>
<proteinExistence type="inferred from homology"/>
<reference key="1">
    <citation type="journal article" date="2006" name="Genome Biol.">
        <title>Genomic analysis reveals that Pseudomonas aeruginosa virulence is combinatorial.</title>
        <authorList>
            <person name="Lee D.G."/>
            <person name="Urbach J.M."/>
            <person name="Wu G."/>
            <person name="Liberati N.T."/>
            <person name="Feinbaum R.L."/>
            <person name="Miyata S."/>
            <person name="Diggins L.T."/>
            <person name="He J."/>
            <person name="Saucier M."/>
            <person name="Deziel E."/>
            <person name="Friedman L."/>
            <person name="Li L."/>
            <person name="Grills G."/>
            <person name="Montgomery K."/>
            <person name="Kucherlapati R."/>
            <person name="Rahme L.G."/>
            <person name="Ausubel F.M."/>
        </authorList>
    </citation>
    <scope>NUCLEOTIDE SEQUENCE [LARGE SCALE GENOMIC DNA]</scope>
    <source>
        <strain>UCBPP-PA14</strain>
    </source>
</reference>
<dbReference type="EC" id="7.2.2.20" evidence="1"/>
<dbReference type="EMBL" id="CP000438">
    <property type="protein sequence ID" value="ABJ14886.1"/>
    <property type="molecule type" value="Genomic_DNA"/>
</dbReference>
<dbReference type="RefSeq" id="WP_003114128.1">
    <property type="nucleotide sequence ID" value="NZ_CP034244.1"/>
</dbReference>
<dbReference type="SMR" id="Q02DK9"/>
<dbReference type="KEGG" id="pau:PA14_72580"/>
<dbReference type="PseudoCAP" id="PA14_72580"/>
<dbReference type="HOGENOM" id="CLU_000604_1_11_6"/>
<dbReference type="BioCyc" id="PAER208963:G1G74-6106-MONOMER"/>
<dbReference type="Proteomes" id="UP000000653">
    <property type="component" value="Chromosome"/>
</dbReference>
<dbReference type="GO" id="GO:0005886">
    <property type="term" value="C:plasma membrane"/>
    <property type="evidence" value="ECO:0007669"/>
    <property type="project" value="UniProtKB-SubCell"/>
</dbReference>
<dbReference type="GO" id="GO:0015633">
    <property type="term" value="F:ABC-type zinc transporter activity"/>
    <property type="evidence" value="ECO:0007669"/>
    <property type="project" value="UniProtKB-EC"/>
</dbReference>
<dbReference type="GO" id="GO:0005524">
    <property type="term" value="F:ATP binding"/>
    <property type="evidence" value="ECO:0007669"/>
    <property type="project" value="UniProtKB-KW"/>
</dbReference>
<dbReference type="GO" id="GO:0016887">
    <property type="term" value="F:ATP hydrolysis activity"/>
    <property type="evidence" value="ECO:0007669"/>
    <property type="project" value="InterPro"/>
</dbReference>
<dbReference type="GO" id="GO:0010043">
    <property type="term" value="P:response to zinc ion"/>
    <property type="evidence" value="ECO:0007669"/>
    <property type="project" value="TreeGrafter"/>
</dbReference>
<dbReference type="CDD" id="cd03235">
    <property type="entry name" value="ABC_Metallic_Cations"/>
    <property type="match status" value="1"/>
</dbReference>
<dbReference type="FunFam" id="3.40.50.300:FF:000392">
    <property type="entry name" value="Zinc import ATP-binding protein ZnuC"/>
    <property type="match status" value="1"/>
</dbReference>
<dbReference type="Gene3D" id="3.40.50.300">
    <property type="entry name" value="P-loop containing nucleotide triphosphate hydrolases"/>
    <property type="match status" value="1"/>
</dbReference>
<dbReference type="InterPro" id="IPR003593">
    <property type="entry name" value="AAA+_ATPase"/>
</dbReference>
<dbReference type="InterPro" id="IPR003439">
    <property type="entry name" value="ABC_transporter-like_ATP-bd"/>
</dbReference>
<dbReference type="InterPro" id="IPR017871">
    <property type="entry name" value="ABC_transporter-like_CS"/>
</dbReference>
<dbReference type="InterPro" id="IPR050153">
    <property type="entry name" value="Metal_Ion_Import_ABC"/>
</dbReference>
<dbReference type="InterPro" id="IPR027417">
    <property type="entry name" value="P-loop_NTPase"/>
</dbReference>
<dbReference type="NCBIfam" id="NF007090">
    <property type="entry name" value="PRK09544.1"/>
    <property type="match status" value="1"/>
</dbReference>
<dbReference type="PANTHER" id="PTHR42734">
    <property type="entry name" value="METAL TRANSPORT SYSTEM ATP-BINDING PROTEIN TM_0124-RELATED"/>
    <property type="match status" value="1"/>
</dbReference>
<dbReference type="PANTHER" id="PTHR42734:SF9">
    <property type="entry name" value="ZINC IMPORT ATP-BINDING PROTEIN ZNUC"/>
    <property type="match status" value="1"/>
</dbReference>
<dbReference type="Pfam" id="PF00005">
    <property type="entry name" value="ABC_tran"/>
    <property type="match status" value="1"/>
</dbReference>
<dbReference type="SMART" id="SM00382">
    <property type="entry name" value="AAA"/>
    <property type="match status" value="1"/>
</dbReference>
<dbReference type="SUPFAM" id="SSF52540">
    <property type="entry name" value="P-loop containing nucleoside triphosphate hydrolases"/>
    <property type="match status" value="1"/>
</dbReference>
<dbReference type="PROSITE" id="PS00211">
    <property type="entry name" value="ABC_TRANSPORTER_1"/>
    <property type="match status" value="1"/>
</dbReference>
<dbReference type="PROSITE" id="PS50893">
    <property type="entry name" value="ABC_TRANSPORTER_2"/>
    <property type="match status" value="1"/>
</dbReference>
<dbReference type="PROSITE" id="PS51298">
    <property type="entry name" value="ZNUC"/>
    <property type="match status" value="1"/>
</dbReference>
<comment type="function">
    <text evidence="1">Part of the ABC transporter complex ZnuABC involved in zinc import. Responsible for energy coupling to the transport system.</text>
</comment>
<comment type="catalytic activity">
    <reaction evidence="1">
        <text>Zn(2+)(out) + ATP(in) + H2O(in) = Zn(2+)(in) + ADP(in) + phosphate(in) + H(+)(in)</text>
        <dbReference type="Rhea" id="RHEA:29795"/>
        <dbReference type="ChEBI" id="CHEBI:15377"/>
        <dbReference type="ChEBI" id="CHEBI:15378"/>
        <dbReference type="ChEBI" id="CHEBI:29105"/>
        <dbReference type="ChEBI" id="CHEBI:30616"/>
        <dbReference type="ChEBI" id="CHEBI:43474"/>
        <dbReference type="ChEBI" id="CHEBI:456216"/>
        <dbReference type="EC" id="7.2.2.20"/>
    </reaction>
</comment>
<comment type="subunit">
    <text evidence="1">The complex is composed of two ATP-binding proteins (ZnuC), two transmembrane proteins (ZnuB) and a solute-binding protein (ZnuA).</text>
</comment>
<comment type="subcellular location">
    <subcellularLocation>
        <location evidence="1">Cell inner membrane</location>
        <topology evidence="1">Peripheral membrane protein</topology>
    </subcellularLocation>
</comment>
<comment type="similarity">
    <text evidence="1">Belongs to the ABC transporter superfamily. Zinc importer (TC 3.A.1.15.5) family.</text>
</comment>
<protein>
    <recommendedName>
        <fullName evidence="1">Zinc import ATP-binding protein ZnuC</fullName>
        <ecNumber evidence="1">7.2.2.20</ecNumber>
    </recommendedName>
</protein>
<feature type="chain" id="PRO_0000281525" description="Zinc import ATP-binding protein ZnuC">
    <location>
        <begin position="1"/>
        <end position="269"/>
    </location>
</feature>
<feature type="domain" description="ABC transporter" evidence="1">
    <location>
        <begin position="6"/>
        <end position="221"/>
    </location>
</feature>
<feature type="binding site" evidence="1">
    <location>
        <begin position="38"/>
        <end position="45"/>
    </location>
    <ligand>
        <name>ATP</name>
        <dbReference type="ChEBI" id="CHEBI:30616"/>
    </ligand>
</feature>
<name>ZNUC_PSEAB</name>
<gene>
    <name evidence="1" type="primary">znuC</name>
    <name type="ordered locus">PA14_72580</name>
</gene>
<evidence type="ECO:0000255" key="1">
    <source>
        <dbReference type="HAMAP-Rule" id="MF_01725"/>
    </source>
</evidence>